<dbReference type="EMBL" id="CP000243">
    <property type="protein sequence ID" value="ABE09568.1"/>
    <property type="molecule type" value="Genomic_DNA"/>
</dbReference>
<dbReference type="RefSeq" id="WP_000517097.1">
    <property type="nucleotide sequence ID" value="NZ_CP064825.1"/>
</dbReference>
<dbReference type="SMR" id="Q1R4Z6"/>
<dbReference type="KEGG" id="eci:UTI89_C4140"/>
<dbReference type="HOGENOM" id="CLU_185147_0_0_6"/>
<dbReference type="Proteomes" id="UP000001952">
    <property type="component" value="Chromosome"/>
</dbReference>
<proteinExistence type="predicted"/>
<reference key="1">
    <citation type="journal article" date="2006" name="Proc. Natl. Acad. Sci. U.S.A.">
        <title>Identification of genes subject to positive selection in uropathogenic strains of Escherichia coli: a comparative genomics approach.</title>
        <authorList>
            <person name="Chen S.L."/>
            <person name="Hung C.-S."/>
            <person name="Xu J."/>
            <person name="Reigstad C.S."/>
            <person name="Magrini V."/>
            <person name="Sabo A."/>
            <person name="Blasiar D."/>
            <person name="Bieri T."/>
            <person name="Meyer R.R."/>
            <person name="Ozersky P."/>
            <person name="Armstrong J.R."/>
            <person name="Fulton R.S."/>
            <person name="Latreille J.P."/>
            <person name="Spieth J."/>
            <person name="Hooton T.M."/>
            <person name="Mardis E.R."/>
            <person name="Hultgren S.J."/>
            <person name="Gordon J.I."/>
        </authorList>
    </citation>
    <scope>NUCLEOTIDE SEQUENCE [LARGE SCALE GENOMIC DNA]</scope>
    <source>
        <strain>UTI89 / UPEC</strain>
    </source>
</reference>
<protein>
    <recommendedName>
        <fullName>Uncharacterized protein YibT</fullName>
    </recommendedName>
</protein>
<gene>
    <name type="primary">yibT</name>
    <name type="ordered locus">UTI89_C4140</name>
</gene>
<sequence>MGKLGENVPLLIDKAVDFMASSQAFREYLKKLPPRNAIPSGIPDESVPLYLQRLEYYRQLYRPKQVEEK</sequence>
<accession>Q1R4Z6</accession>
<name>YIBT_ECOUT</name>
<feature type="chain" id="PRO_0000263013" description="Uncharacterized protein YibT">
    <location>
        <begin position="1"/>
        <end position="69"/>
    </location>
</feature>
<organism>
    <name type="scientific">Escherichia coli (strain UTI89 / UPEC)</name>
    <dbReference type="NCBI Taxonomy" id="364106"/>
    <lineage>
        <taxon>Bacteria</taxon>
        <taxon>Pseudomonadati</taxon>
        <taxon>Pseudomonadota</taxon>
        <taxon>Gammaproteobacteria</taxon>
        <taxon>Enterobacterales</taxon>
        <taxon>Enterobacteriaceae</taxon>
        <taxon>Escherichia</taxon>
    </lineage>
</organism>